<accession>Q85WX8</accession>
<evidence type="ECO:0000250" key="1"/>
<evidence type="ECO:0000256" key="2">
    <source>
        <dbReference type="SAM" id="MobiDB-lite"/>
    </source>
</evidence>
<evidence type="ECO:0000305" key="3"/>
<feature type="chain" id="PRO_0000132652" description="Small ribosomal subunit protein uS4c">
    <location>
        <begin position="1"/>
        <end position="203"/>
    </location>
</feature>
<feature type="domain" description="S4 RNA-binding">
    <location>
        <begin position="91"/>
        <end position="152"/>
    </location>
</feature>
<feature type="region of interest" description="Disordered" evidence="2">
    <location>
        <begin position="18"/>
        <end position="42"/>
    </location>
</feature>
<feature type="compositionally biased region" description="Polar residues" evidence="2">
    <location>
        <begin position="33"/>
        <end position="42"/>
    </location>
</feature>
<keyword id="KW-0150">Chloroplast</keyword>
<keyword id="KW-0934">Plastid</keyword>
<keyword id="KW-0687">Ribonucleoprotein</keyword>
<keyword id="KW-0689">Ribosomal protein</keyword>
<keyword id="KW-0694">RNA-binding</keyword>
<keyword id="KW-0699">rRNA-binding</keyword>
<comment type="function">
    <text evidence="1">One of the primary rRNA binding proteins, it binds directly to 16S rRNA where it nucleates assembly of the body of the 30S subunit.</text>
</comment>
<comment type="function">
    <text evidence="1">With S5 and S12 plays an important role in translational accuracy.</text>
</comment>
<comment type="subunit">
    <text evidence="1">Part of the 30S ribosomal subunit. Contacts protein S5. The interaction surface between S4 and S5 is involved in control of translational fidelity (By similarity).</text>
</comment>
<comment type="subcellular location">
    <subcellularLocation>
        <location>Plastid</location>
        <location>Chloroplast</location>
    </subcellularLocation>
</comment>
<comment type="similarity">
    <text evidence="3">Belongs to the universal ribosomal protein uS4 family.</text>
</comment>
<sequence length="203" mass="24066">MSRYRGPRLKIIRRLKTLPGLTSKRPKNRKDSMNMNRSSSRKISQYRIRLEEKQKLRFHYGLTERQLLKYVRVSRRAKGSTGQVLLQLLEMRLDNIIFRLGMAPTIPGARQLVNHGHIRVNDHMVDIPSYPCKPQDVITIRDQPRLRAIIKKNIDLFQRDKLPNHLTFHPLQYKGFINQIIDSKWISLKINELLVVEYYSRQA</sequence>
<reference key="1">
    <citation type="submission" date="2003-02" db="EMBL/GenBank/DDBJ databases">
        <title>Complete nucleotide sequence of Pinus koraiensis.</title>
        <authorList>
            <person name="Noh E.W."/>
            <person name="Lee J.S."/>
            <person name="Choi Y.I."/>
            <person name="Han M.S."/>
            <person name="Yi Y.S."/>
            <person name="Han S.U."/>
        </authorList>
    </citation>
    <scope>NUCLEOTIDE SEQUENCE [LARGE SCALE GENOMIC DNA]</scope>
    <source>
        <strain>KangWon16</strain>
    </source>
</reference>
<protein>
    <recommendedName>
        <fullName evidence="3">Small ribosomal subunit protein uS4c</fullName>
    </recommendedName>
    <alternativeName>
        <fullName>30S ribosomal protein S4, chloroplastic</fullName>
    </alternativeName>
</protein>
<gene>
    <name type="primary">rps4</name>
</gene>
<proteinExistence type="inferred from homology"/>
<organism>
    <name type="scientific">Pinus koraiensis</name>
    <name type="common">Korean pine</name>
    <dbReference type="NCBI Taxonomy" id="88728"/>
    <lineage>
        <taxon>Eukaryota</taxon>
        <taxon>Viridiplantae</taxon>
        <taxon>Streptophyta</taxon>
        <taxon>Embryophyta</taxon>
        <taxon>Tracheophyta</taxon>
        <taxon>Spermatophyta</taxon>
        <taxon>Pinopsida</taxon>
        <taxon>Pinidae</taxon>
        <taxon>Conifers I</taxon>
        <taxon>Pinales</taxon>
        <taxon>Pinaceae</taxon>
        <taxon>Pinus</taxon>
        <taxon>Pinus subgen. Strobus</taxon>
    </lineage>
</organism>
<dbReference type="EMBL" id="AY228468">
    <property type="protein sequence ID" value="AAO74091.2"/>
    <property type="molecule type" value="Genomic_DNA"/>
</dbReference>
<dbReference type="RefSeq" id="NP_817246.2">
    <property type="nucleotide sequence ID" value="NC_004677.2"/>
</dbReference>
<dbReference type="SMR" id="Q85WX8"/>
<dbReference type="GeneID" id="806937"/>
<dbReference type="GO" id="GO:0009507">
    <property type="term" value="C:chloroplast"/>
    <property type="evidence" value="ECO:0007669"/>
    <property type="project" value="UniProtKB-SubCell"/>
</dbReference>
<dbReference type="GO" id="GO:0015935">
    <property type="term" value="C:small ribosomal subunit"/>
    <property type="evidence" value="ECO:0007669"/>
    <property type="project" value="InterPro"/>
</dbReference>
<dbReference type="GO" id="GO:0019843">
    <property type="term" value="F:rRNA binding"/>
    <property type="evidence" value="ECO:0007669"/>
    <property type="project" value="UniProtKB-UniRule"/>
</dbReference>
<dbReference type="GO" id="GO:0003735">
    <property type="term" value="F:structural constituent of ribosome"/>
    <property type="evidence" value="ECO:0007669"/>
    <property type="project" value="InterPro"/>
</dbReference>
<dbReference type="GO" id="GO:0042274">
    <property type="term" value="P:ribosomal small subunit biogenesis"/>
    <property type="evidence" value="ECO:0007669"/>
    <property type="project" value="TreeGrafter"/>
</dbReference>
<dbReference type="GO" id="GO:0006412">
    <property type="term" value="P:translation"/>
    <property type="evidence" value="ECO:0007669"/>
    <property type="project" value="UniProtKB-UniRule"/>
</dbReference>
<dbReference type="CDD" id="cd00165">
    <property type="entry name" value="S4"/>
    <property type="match status" value="1"/>
</dbReference>
<dbReference type="FunFam" id="1.10.1050.10:FF:000002">
    <property type="entry name" value="30S ribosomal protein S4, chloroplastic"/>
    <property type="match status" value="1"/>
</dbReference>
<dbReference type="FunFam" id="3.10.290.10:FF:000081">
    <property type="entry name" value="30S ribosomal protein S4, chloroplastic"/>
    <property type="match status" value="1"/>
</dbReference>
<dbReference type="Gene3D" id="1.10.1050.10">
    <property type="entry name" value="Ribosomal Protein S4 Delta 41, Chain A, domain 1"/>
    <property type="match status" value="1"/>
</dbReference>
<dbReference type="Gene3D" id="3.10.290.10">
    <property type="entry name" value="RNA-binding S4 domain"/>
    <property type="match status" value="1"/>
</dbReference>
<dbReference type="HAMAP" id="MF_01306_B">
    <property type="entry name" value="Ribosomal_uS4_B"/>
    <property type="match status" value="1"/>
</dbReference>
<dbReference type="InterPro" id="IPR022801">
    <property type="entry name" value="Ribosomal_uS4"/>
</dbReference>
<dbReference type="InterPro" id="IPR005709">
    <property type="entry name" value="Ribosomal_uS4_bac-type"/>
</dbReference>
<dbReference type="InterPro" id="IPR018079">
    <property type="entry name" value="Ribosomal_uS4_CS"/>
</dbReference>
<dbReference type="InterPro" id="IPR001912">
    <property type="entry name" value="Ribosomal_uS4_N"/>
</dbReference>
<dbReference type="InterPro" id="IPR002942">
    <property type="entry name" value="S4_RNA-bd"/>
</dbReference>
<dbReference type="InterPro" id="IPR036986">
    <property type="entry name" value="S4_RNA-bd_sf"/>
</dbReference>
<dbReference type="NCBIfam" id="NF003717">
    <property type="entry name" value="PRK05327.1"/>
    <property type="match status" value="1"/>
</dbReference>
<dbReference type="NCBIfam" id="TIGR01017">
    <property type="entry name" value="rpsD_bact"/>
    <property type="match status" value="1"/>
</dbReference>
<dbReference type="PANTHER" id="PTHR11831">
    <property type="entry name" value="30S 40S RIBOSOMAL PROTEIN"/>
    <property type="match status" value="1"/>
</dbReference>
<dbReference type="PANTHER" id="PTHR11831:SF4">
    <property type="entry name" value="SMALL RIBOSOMAL SUBUNIT PROTEIN US4M"/>
    <property type="match status" value="1"/>
</dbReference>
<dbReference type="Pfam" id="PF00163">
    <property type="entry name" value="Ribosomal_S4"/>
    <property type="match status" value="1"/>
</dbReference>
<dbReference type="Pfam" id="PF01479">
    <property type="entry name" value="S4"/>
    <property type="match status" value="1"/>
</dbReference>
<dbReference type="SMART" id="SM01390">
    <property type="entry name" value="Ribosomal_S4"/>
    <property type="match status" value="1"/>
</dbReference>
<dbReference type="SMART" id="SM00363">
    <property type="entry name" value="S4"/>
    <property type="match status" value="1"/>
</dbReference>
<dbReference type="SUPFAM" id="SSF55174">
    <property type="entry name" value="Alpha-L RNA-binding motif"/>
    <property type="match status" value="1"/>
</dbReference>
<dbReference type="PROSITE" id="PS00632">
    <property type="entry name" value="RIBOSOMAL_S4"/>
    <property type="match status" value="1"/>
</dbReference>
<dbReference type="PROSITE" id="PS50889">
    <property type="entry name" value="S4"/>
    <property type="match status" value="1"/>
</dbReference>
<name>RR4_PINKO</name>
<geneLocation type="chloroplast"/>